<sequence length="543" mass="60682">MKKFLKYLAVFLVVLLIAAIAFLFRPIASKKIQTSANEPVVDVVLVGGGIMSATLGTYLTELEPNWQIRMYERLDRVAQESSNGFNNAGTGHSGFMEMNYTEEKDGKMDISKAVKVAEQFEISKQFWAYQVKHNVLGQPSSFINPVPHHAFVWGDNVAFLEKRYAAMIKNPLFYGMQFTENANQIKQWAPLTMEGRDPAQKVAATRMEIGSDVNYGAITTQLVNNLDKHQNFKLSTSSEVTGISQNDDKTWTVAFKNLKTGKADHVKTRFVFIGAGGASVKLLQMTGLPESKQYAGFPVGGVFLMTDNPKIAAEHTAKLYGRAELGAPPMSVPHIDTRYIDGKKYVLFGPFATYSNKFLKQGSQFDLLASTNKNNVLPMTAVGMENLDLVKYLVSQVMMTDEDRFNELKKYYPNAKREDWRLNQGGQRVQVIKKEEGKPAKLQFGTEVFVSKDRSVTALMGASPGASTSPYIMLNLLEKAFPQQVKGEWNPKLHEIVRSYKQDLSDNPVLLDQVRQYTSQTLGLHYTPLTQADFAKIAASQSK</sequence>
<accession>Q6FDG0</accession>
<feature type="chain" id="PRO_1000023789" description="Probable malate:quinone oxidoreductase">
    <location>
        <begin position="1"/>
        <end position="543"/>
    </location>
</feature>
<dbReference type="EC" id="1.1.5.4" evidence="1"/>
<dbReference type="EMBL" id="CR543861">
    <property type="protein sequence ID" value="CAG67898.1"/>
    <property type="molecule type" value="Genomic_DNA"/>
</dbReference>
<dbReference type="RefSeq" id="WP_004921803.1">
    <property type="nucleotide sequence ID" value="NC_005966.1"/>
</dbReference>
<dbReference type="SMR" id="Q6FDG0"/>
<dbReference type="STRING" id="202950.GCA_001485005_01354"/>
<dbReference type="GeneID" id="45233453"/>
<dbReference type="KEGG" id="aci:ACIAD1007"/>
<dbReference type="eggNOG" id="COG0579">
    <property type="taxonomic scope" value="Bacteria"/>
</dbReference>
<dbReference type="HOGENOM" id="CLU_028151_0_0_6"/>
<dbReference type="OrthoDB" id="9763983at2"/>
<dbReference type="BioCyc" id="ASP62977:ACIAD_RS04640-MONOMER"/>
<dbReference type="UniPathway" id="UPA00223">
    <property type="reaction ID" value="UER01008"/>
</dbReference>
<dbReference type="Proteomes" id="UP000000430">
    <property type="component" value="Chromosome"/>
</dbReference>
<dbReference type="GO" id="GO:0047545">
    <property type="term" value="F:2-hydroxyglutarate dehydrogenase activity"/>
    <property type="evidence" value="ECO:0007669"/>
    <property type="project" value="TreeGrafter"/>
</dbReference>
<dbReference type="GO" id="GO:0008924">
    <property type="term" value="F:L-malate dehydrogenase (quinone) activity"/>
    <property type="evidence" value="ECO:0007669"/>
    <property type="project" value="UniProtKB-UniRule"/>
</dbReference>
<dbReference type="GO" id="GO:0006099">
    <property type="term" value="P:tricarboxylic acid cycle"/>
    <property type="evidence" value="ECO:0007669"/>
    <property type="project" value="UniProtKB-UniRule"/>
</dbReference>
<dbReference type="HAMAP" id="MF_00212">
    <property type="entry name" value="MQO"/>
    <property type="match status" value="1"/>
</dbReference>
<dbReference type="InterPro" id="IPR036188">
    <property type="entry name" value="FAD/NAD-bd_sf"/>
</dbReference>
<dbReference type="InterPro" id="IPR006231">
    <property type="entry name" value="MQO"/>
</dbReference>
<dbReference type="NCBIfam" id="TIGR01320">
    <property type="entry name" value="mal_quin_oxido"/>
    <property type="match status" value="1"/>
</dbReference>
<dbReference type="NCBIfam" id="NF003603">
    <property type="entry name" value="PRK05257.1-1"/>
    <property type="match status" value="1"/>
</dbReference>
<dbReference type="NCBIfam" id="NF003605">
    <property type="entry name" value="PRK05257.1-4"/>
    <property type="match status" value="1"/>
</dbReference>
<dbReference type="NCBIfam" id="NF003606">
    <property type="entry name" value="PRK05257.2-1"/>
    <property type="match status" value="1"/>
</dbReference>
<dbReference type="NCBIfam" id="NF003611">
    <property type="entry name" value="PRK05257.3-2"/>
    <property type="match status" value="1"/>
</dbReference>
<dbReference type="NCBIfam" id="NF009875">
    <property type="entry name" value="PRK13339.1"/>
    <property type="match status" value="1"/>
</dbReference>
<dbReference type="PANTHER" id="PTHR43104">
    <property type="entry name" value="L-2-HYDROXYGLUTARATE DEHYDROGENASE, MITOCHONDRIAL"/>
    <property type="match status" value="1"/>
</dbReference>
<dbReference type="PANTHER" id="PTHR43104:SF2">
    <property type="entry name" value="L-2-HYDROXYGLUTARATE DEHYDROGENASE, MITOCHONDRIAL"/>
    <property type="match status" value="1"/>
</dbReference>
<dbReference type="Pfam" id="PF06039">
    <property type="entry name" value="Mqo"/>
    <property type="match status" value="1"/>
</dbReference>
<dbReference type="SUPFAM" id="SSF51905">
    <property type="entry name" value="FAD/NAD(P)-binding domain"/>
    <property type="match status" value="1"/>
</dbReference>
<keyword id="KW-0274">FAD</keyword>
<keyword id="KW-0285">Flavoprotein</keyword>
<keyword id="KW-0560">Oxidoreductase</keyword>
<keyword id="KW-0816">Tricarboxylic acid cycle</keyword>
<reference key="1">
    <citation type="journal article" date="2004" name="Nucleic Acids Res.">
        <title>Unique features revealed by the genome sequence of Acinetobacter sp. ADP1, a versatile and naturally transformation competent bacterium.</title>
        <authorList>
            <person name="Barbe V."/>
            <person name="Vallenet D."/>
            <person name="Fonknechten N."/>
            <person name="Kreimeyer A."/>
            <person name="Oztas S."/>
            <person name="Labarre L."/>
            <person name="Cruveiller S."/>
            <person name="Robert C."/>
            <person name="Duprat S."/>
            <person name="Wincker P."/>
            <person name="Ornston L.N."/>
            <person name="Weissenbach J."/>
            <person name="Marliere P."/>
            <person name="Cohen G.N."/>
            <person name="Medigue C."/>
        </authorList>
    </citation>
    <scope>NUCLEOTIDE SEQUENCE [LARGE SCALE GENOMIC DNA]</scope>
    <source>
        <strain>ATCC 33305 / BD413 / ADP1</strain>
    </source>
</reference>
<gene>
    <name evidence="1" type="primary">mqo</name>
    <name type="ordered locus">ACIAD1007</name>
</gene>
<organism>
    <name type="scientific">Acinetobacter baylyi (strain ATCC 33305 / BD413 / ADP1)</name>
    <dbReference type="NCBI Taxonomy" id="62977"/>
    <lineage>
        <taxon>Bacteria</taxon>
        <taxon>Pseudomonadati</taxon>
        <taxon>Pseudomonadota</taxon>
        <taxon>Gammaproteobacteria</taxon>
        <taxon>Moraxellales</taxon>
        <taxon>Moraxellaceae</taxon>
        <taxon>Acinetobacter</taxon>
    </lineage>
</organism>
<name>MQO_ACIAD</name>
<protein>
    <recommendedName>
        <fullName evidence="1">Probable malate:quinone oxidoreductase</fullName>
        <ecNumber evidence="1">1.1.5.4</ecNumber>
    </recommendedName>
    <alternativeName>
        <fullName evidence="1">MQO</fullName>
    </alternativeName>
    <alternativeName>
        <fullName evidence="1">Malate dehydrogenase [quinone]</fullName>
    </alternativeName>
</protein>
<evidence type="ECO:0000255" key="1">
    <source>
        <dbReference type="HAMAP-Rule" id="MF_00212"/>
    </source>
</evidence>
<comment type="catalytic activity">
    <reaction evidence="1">
        <text>(S)-malate + a quinone = a quinol + oxaloacetate</text>
        <dbReference type="Rhea" id="RHEA:46012"/>
        <dbReference type="ChEBI" id="CHEBI:15589"/>
        <dbReference type="ChEBI" id="CHEBI:16452"/>
        <dbReference type="ChEBI" id="CHEBI:24646"/>
        <dbReference type="ChEBI" id="CHEBI:132124"/>
        <dbReference type="EC" id="1.1.5.4"/>
    </reaction>
</comment>
<comment type="cofactor">
    <cofactor evidence="1">
        <name>FAD</name>
        <dbReference type="ChEBI" id="CHEBI:57692"/>
    </cofactor>
</comment>
<comment type="pathway">
    <text evidence="1">Carbohydrate metabolism; tricarboxylic acid cycle; oxaloacetate from (S)-malate (quinone route): step 1/1.</text>
</comment>
<comment type="similarity">
    <text evidence="1">Belongs to the MQO family.</text>
</comment>
<proteinExistence type="inferred from homology"/>